<accession>Q5NVC7</accession>
<accession>Q5NVI7</accession>
<accession>Q5R509</accession>
<reference key="1">
    <citation type="submission" date="2004-11" db="EMBL/GenBank/DDBJ databases">
        <authorList>
            <consortium name="The German cDNA consortium"/>
        </authorList>
    </citation>
    <scope>NUCLEOTIDE SEQUENCE [LARGE SCALE MRNA]</scope>
    <source>
        <tissue>Brain cortex</tissue>
    </source>
</reference>
<organism>
    <name type="scientific">Pongo abelii</name>
    <name type="common">Sumatran orangutan</name>
    <name type="synonym">Pongo pygmaeus abelii</name>
    <dbReference type="NCBI Taxonomy" id="9601"/>
    <lineage>
        <taxon>Eukaryota</taxon>
        <taxon>Metazoa</taxon>
        <taxon>Chordata</taxon>
        <taxon>Craniata</taxon>
        <taxon>Vertebrata</taxon>
        <taxon>Euteleostomi</taxon>
        <taxon>Mammalia</taxon>
        <taxon>Eutheria</taxon>
        <taxon>Euarchontoglires</taxon>
        <taxon>Primates</taxon>
        <taxon>Haplorrhini</taxon>
        <taxon>Catarrhini</taxon>
        <taxon>Hominidae</taxon>
        <taxon>Pongo</taxon>
    </lineage>
</organism>
<sequence length="372" mass="41587">MKAGATSMWASCCGLLNEVMGTGAVRGQQSGFAGATGPFRFTPNPEFSTYPPAATEGPNIVCKACGLSFSVFRKKHVCCDCKKDFCSVCSVLQENLRRCSTCHLLQETAFQRPQLMRLKVKDLRQYLILRNIPTDTCREKEDLVDLVLCHHGLGSEDDMDTSSLNSSRSQTSSFFTRSFFSNYTAPSATMSSFQGELMDGDQTSRSGVPAQVQSEITSANTEDDDDDDDEDDDDEEENAEDQNPGLSKERVRASLSDLSSLDDVEGMSVRQLKEILARNFVNYSGCCEKWELVEKVNRLYKENEENQKSYGERLQLQDEEDDSLCRICMDAVIDCVLLECGHMVTCTKCGKRMSECPICRQYVVRAVHVFKS</sequence>
<name>RNF34_PONAB</name>
<protein>
    <recommendedName>
        <fullName evidence="6">E3 ubiquitin-protein ligase RNF34</fullName>
        <ecNumber evidence="2">2.3.2.27</ecNumber>
    </recommendedName>
    <alternativeName>
        <fullName>RING finger protein 34</fullName>
    </alternativeName>
    <alternativeName>
        <fullName evidence="6">RING-type E3 ubiquitin transferase RNF34</fullName>
    </alternativeName>
</protein>
<evidence type="ECO:0000250" key="1">
    <source>
        <dbReference type="UniProtKB" id="Q6AYH3"/>
    </source>
</evidence>
<evidence type="ECO:0000250" key="2">
    <source>
        <dbReference type="UniProtKB" id="Q969K3"/>
    </source>
</evidence>
<evidence type="ECO:0000250" key="3">
    <source>
        <dbReference type="UniProtKB" id="Q99KR6"/>
    </source>
</evidence>
<evidence type="ECO:0000255" key="4">
    <source>
        <dbReference type="PROSITE-ProRule" id="PRU00175"/>
    </source>
</evidence>
<evidence type="ECO:0000256" key="5">
    <source>
        <dbReference type="SAM" id="MobiDB-lite"/>
    </source>
</evidence>
<evidence type="ECO:0000305" key="6"/>
<gene>
    <name type="primary">RNF34</name>
</gene>
<dbReference type="EC" id="2.3.2.27" evidence="2"/>
<dbReference type="EMBL" id="CR861076">
    <property type="protein sequence ID" value="CAH93157.1"/>
    <property type="molecule type" value="mRNA"/>
</dbReference>
<dbReference type="EMBL" id="CR926111">
    <property type="protein sequence ID" value="CAI29736.1"/>
    <property type="molecule type" value="mRNA"/>
</dbReference>
<dbReference type="EMBL" id="CR926044">
    <property type="protein sequence ID" value="CAI29676.1"/>
    <property type="molecule type" value="mRNA"/>
</dbReference>
<dbReference type="RefSeq" id="NP_001126862.1">
    <property type="nucleotide sequence ID" value="NM_001133390.1"/>
</dbReference>
<dbReference type="RefSeq" id="NP_001128919.2">
    <property type="nucleotide sequence ID" value="NM_001135447.2"/>
</dbReference>
<dbReference type="SMR" id="Q5NVC7"/>
<dbReference type="FunCoup" id="Q5NVC7">
    <property type="interactions" value="4488"/>
</dbReference>
<dbReference type="STRING" id="9601.ENSPPYP00000005752"/>
<dbReference type="GeneID" id="100173871"/>
<dbReference type="KEGG" id="pon:100173871"/>
<dbReference type="CTD" id="80196"/>
<dbReference type="eggNOG" id="KOG4275">
    <property type="taxonomic scope" value="Eukaryota"/>
</dbReference>
<dbReference type="InParanoid" id="Q5NVC7"/>
<dbReference type="OrthoDB" id="3045089at2759"/>
<dbReference type="UniPathway" id="UPA00143"/>
<dbReference type="Proteomes" id="UP000001595">
    <property type="component" value="Unplaced"/>
</dbReference>
<dbReference type="GO" id="GO:0005737">
    <property type="term" value="C:cytoplasm"/>
    <property type="evidence" value="ECO:0000250"/>
    <property type="project" value="UniProtKB"/>
</dbReference>
<dbReference type="GO" id="GO:0005829">
    <property type="term" value="C:cytosol"/>
    <property type="evidence" value="ECO:0007669"/>
    <property type="project" value="UniProtKB-SubCell"/>
</dbReference>
<dbReference type="GO" id="GO:0012505">
    <property type="term" value="C:endomembrane system"/>
    <property type="evidence" value="ECO:0007669"/>
    <property type="project" value="UniProtKB-SubCell"/>
</dbReference>
<dbReference type="GO" id="GO:0016607">
    <property type="term" value="C:nuclear speck"/>
    <property type="evidence" value="ECO:0007669"/>
    <property type="project" value="UniProtKB-SubCell"/>
</dbReference>
<dbReference type="GO" id="GO:0005634">
    <property type="term" value="C:nucleus"/>
    <property type="evidence" value="ECO:0000250"/>
    <property type="project" value="UniProtKB"/>
</dbReference>
<dbReference type="GO" id="GO:0005886">
    <property type="term" value="C:plasma membrane"/>
    <property type="evidence" value="ECO:0000250"/>
    <property type="project" value="UniProtKB"/>
</dbReference>
<dbReference type="GO" id="GO:1901981">
    <property type="term" value="F:phosphatidylinositol phosphate binding"/>
    <property type="evidence" value="ECO:0000250"/>
    <property type="project" value="UniProtKB"/>
</dbReference>
<dbReference type="GO" id="GO:0061630">
    <property type="term" value="F:ubiquitin protein ligase activity"/>
    <property type="evidence" value="ECO:0000250"/>
    <property type="project" value="UniProtKB"/>
</dbReference>
<dbReference type="GO" id="GO:0008270">
    <property type="term" value="F:zinc ion binding"/>
    <property type="evidence" value="ECO:0007669"/>
    <property type="project" value="UniProtKB-KW"/>
</dbReference>
<dbReference type="GO" id="GO:0006915">
    <property type="term" value="P:apoptotic process"/>
    <property type="evidence" value="ECO:0007669"/>
    <property type="project" value="UniProtKB-KW"/>
</dbReference>
<dbReference type="GO" id="GO:1902042">
    <property type="term" value="P:negative regulation of extrinsic apoptotic signaling pathway via death domain receptors"/>
    <property type="evidence" value="ECO:0000250"/>
    <property type="project" value="UniProtKB"/>
</dbReference>
<dbReference type="GO" id="GO:1901797">
    <property type="term" value="P:negative regulation of signal transduction by p53 class mediator"/>
    <property type="evidence" value="ECO:0000250"/>
    <property type="project" value="UniProtKB"/>
</dbReference>
<dbReference type="GO" id="GO:0035872">
    <property type="term" value="P:nucleotide-binding domain, leucine rich repeat containing receptor signaling pathway"/>
    <property type="evidence" value="ECO:0000250"/>
    <property type="project" value="UniProtKB"/>
</dbReference>
<dbReference type="GO" id="GO:0043161">
    <property type="term" value="P:proteasome-mediated ubiquitin-dependent protein catabolic process"/>
    <property type="evidence" value="ECO:0000250"/>
    <property type="project" value="UniProtKB"/>
</dbReference>
<dbReference type="GO" id="GO:0070936">
    <property type="term" value="P:protein K48-linked ubiquitination"/>
    <property type="evidence" value="ECO:0000250"/>
    <property type="project" value="UniProtKB"/>
</dbReference>
<dbReference type="GO" id="GO:0016567">
    <property type="term" value="P:protein ubiquitination"/>
    <property type="evidence" value="ECO:0000250"/>
    <property type="project" value="UniProtKB"/>
</dbReference>
<dbReference type="GO" id="GO:2000374">
    <property type="term" value="P:regulation of oxygen metabolic process"/>
    <property type="evidence" value="ECO:0000250"/>
    <property type="project" value="UniProtKB"/>
</dbReference>
<dbReference type="GO" id="GO:0006511">
    <property type="term" value="P:ubiquitin-dependent protein catabolic process"/>
    <property type="evidence" value="ECO:0000250"/>
    <property type="project" value="UniProtKB"/>
</dbReference>
<dbReference type="CDD" id="cd15769">
    <property type="entry name" value="FYVE_CARP1"/>
    <property type="match status" value="1"/>
</dbReference>
<dbReference type="CDD" id="cd16706">
    <property type="entry name" value="RING-HC_CARP1"/>
    <property type="match status" value="1"/>
</dbReference>
<dbReference type="FunFam" id="1.10.720.140:FF:000001">
    <property type="entry name" value="E3 ubiquitin-protein ligase RNF34 isoform X1"/>
    <property type="match status" value="1"/>
</dbReference>
<dbReference type="FunFam" id="3.30.40.10:FF:000110">
    <property type="entry name" value="E3 ubiquitin-protein ligase RNF34 isoform X1"/>
    <property type="match status" value="1"/>
</dbReference>
<dbReference type="Gene3D" id="1.10.720.140">
    <property type="match status" value="1"/>
</dbReference>
<dbReference type="Gene3D" id="1.10.720.30">
    <property type="entry name" value="SAP domain"/>
    <property type="match status" value="1"/>
</dbReference>
<dbReference type="Gene3D" id="3.30.40.10">
    <property type="entry name" value="Zinc/RING finger domain, C3HC4 (zinc finger)"/>
    <property type="match status" value="1"/>
</dbReference>
<dbReference type="InterPro" id="IPR049320">
    <property type="entry name" value="CARP1_2_FYVE"/>
</dbReference>
<dbReference type="InterPro" id="IPR049323">
    <property type="entry name" value="CARP1_FYVE"/>
</dbReference>
<dbReference type="InterPro" id="IPR051728">
    <property type="entry name" value="RING-FYVE_E3_ubiquitin-ligase"/>
</dbReference>
<dbReference type="InterPro" id="IPR055111">
    <property type="entry name" value="RNF34L-like_HeH"/>
</dbReference>
<dbReference type="InterPro" id="IPR036361">
    <property type="entry name" value="SAP_dom_sf"/>
</dbReference>
<dbReference type="InterPro" id="IPR011011">
    <property type="entry name" value="Znf_FYVE_PHD"/>
</dbReference>
<dbReference type="InterPro" id="IPR001841">
    <property type="entry name" value="Znf_RING"/>
</dbReference>
<dbReference type="InterPro" id="IPR013083">
    <property type="entry name" value="Znf_RING/FYVE/PHD"/>
</dbReference>
<dbReference type="PANTHER" id="PTHR14879">
    <property type="entry name" value="CASPASE REGULATOR, RING FINGER DOMAIN-CONTAINING"/>
    <property type="match status" value="1"/>
</dbReference>
<dbReference type="PANTHER" id="PTHR14879:SF3">
    <property type="entry name" value="E3 UBIQUITIN-PROTEIN LIGASE RNF34"/>
    <property type="match status" value="1"/>
</dbReference>
<dbReference type="Pfam" id="PF21272">
    <property type="entry name" value="FYVE_CARP1-2"/>
    <property type="match status" value="1"/>
</dbReference>
<dbReference type="Pfam" id="PF22968">
    <property type="entry name" value="RNF34L-like_3rd"/>
    <property type="match status" value="1"/>
</dbReference>
<dbReference type="Pfam" id="PF23632">
    <property type="entry name" value="SAP_RNF34_RFFL"/>
    <property type="match status" value="1"/>
</dbReference>
<dbReference type="Pfam" id="PF13920">
    <property type="entry name" value="zf-C3HC4_3"/>
    <property type="match status" value="1"/>
</dbReference>
<dbReference type="SMART" id="SM00184">
    <property type="entry name" value="RING"/>
    <property type="match status" value="1"/>
</dbReference>
<dbReference type="SUPFAM" id="SSF57903">
    <property type="entry name" value="FYVE/PHD zinc finger"/>
    <property type="match status" value="1"/>
</dbReference>
<dbReference type="SUPFAM" id="SSF57850">
    <property type="entry name" value="RING/U-box"/>
    <property type="match status" value="1"/>
</dbReference>
<dbReference type="SUPFAM" id="SSF68906">
    <property type="entry name" value="SAP domain"/>
    <property type="match status" value="1"/>
</dbReference>
<dbReference type="PROSITE" id="PS50089">
    <property type="entry name" value="ZF_RING_2"/>
    <property type="match status" value="1"/>
</dbReference>
<comment type="function">
    <text evidence="2">E3 ubiquitin-protein ligase that regulates several biological processes through the ubiquitin-mediated proteasomal degradation of various target proteins. Ubiquitinates the caspases CASP8 and CASP10, promoting their proteasomal degradation, to negatively regulate cell death downstream of death domain receptors in the extrinsic pathway of apoptosis. May mediate 'Lys-48'-linked polyubiquitination of RIPK1 and its subsequent proteasomal degradation thereby indirectly regulating the tumor necrosis factor-mediated signaling pathway. Negatively regulates p53/TP53 through its direct ubiquitination and targeting to proteasomal degradation. Indirectly, may also negatively regulate p53/TP53 through ubiquitination and degradation of SFN. Mediates PPARGC1A proteasomal degradation probably through ubiquitination thereby indirectly regulating the metabolism of brown fat cells. Possibly involved in innate immunity, through 'Lys-48'-linked polyubiquitination of NOD1 and its subsequent proteasomal degradation.</text>
</comment>
<comment type="catalytic activity">
    <reaction evidence="2">
        <text>S-ubiquitinyl-[E2 ubiquitin-conjugating enzyme]-L-cysteine + [acceptor protein]-L-lysine = [E2 ubiquitin-conjugating enzyme]-L-cysteine + N(6)-ubiquitinyl-[acceptor protein]-L-lysine.</text>
        <dbReference type="EC" id="2.3.2.27"/>
    </reaction>
</comment>
<comment type="pathway">
    <text evidence="2">Protein modification; protein ubiquitination.</text>
</comment>
<comment type="subunit">
    <text evidence="2">Interacts with CASP8 and CASP10. Interacts with p53/TP53; involved in p53/TP53 ubiquitination. Interacts (via RING-type zinc finger) with MDM2; the interaction stabilizes MDM2. Interacts (via RING-type zinc finger) with PPARGC1A. Interacts with NOD1.</text>
</comment>
<comment type="subcellular location">
    <subcellularLocation>
        <location evidence="2">Cell membrane</location>
        <topology evidence="2">Peripheral membrane protein</topology>
    </subcellularLocation>
    <subcellularLocation>
        <location evidence="1">Endomembrane system</location>
        <topology evidence="1">Peripheral membrane protein</topology>
    </subcellularLocation>
    <subcellularLocation>
        <location evidence="2">Nucleus</location>
    </subcellularLocation>
    <subcellularLocation>
        <location evidence="2">Nucleus speckle</location>
    </subcellularLocation>
    <subcellularLocation>
        <location evidence="2">Cytoplasm</location>
        <location evidence="2">Cytosol</location>
    </subcellularLocation>
</comment>
<comment type="domain">
    <text evidence="2">The RING-type zinc finger is required for the ubiquitination of target proteins.</text>
</comment>
<comment type="domain">
    <text evidence="2">The FYVE-type zinc finger domain is required for localization and may confer affinity for cellular compartments enriched in phosphatidylinositol 5-phosphate and phosphatidylinositol 3-phosphate phospholipids.</text>
</comment>
<comment type="PTM">
    <text evidence="1">Autoubiquitinated (in vitro).</text>
</comment>
<comment type="PTM">
    <text evidence="2">Proteolytically cleaved by caspases upon induction of apoptosis by TNF.</text>
</comment>
<proteinExistence type="evidence at transcript level"/>
<keyword id="KW-0053">Apoptosis</keyword>
<keyword id="KW-1003">Cell membrane</keyword>
<keyword id="KW-0963">Cytoplasm</keyword>
<keyword id="KW-0472">Membrane</keyword>
<keyword id="KW-0479">Metal-binding</keyword>
<keyword id="KW-0539">Nucleus</keyword>
<keyword id="KW-0597">Phosphoprotein</keyword>
<keyword id="KW-1185">Reference proteome</keyword>
<keyword id="KW-0677">Repeat</keyword>
<keyword id="KW-0808">Transferase</keyword>
<keyword id="KW-0832">Ubl conjugation</keyword>
<keyword id="KW-0833">Ubl conjugation pathway</keyword>
<keyword id="KW-0862">Zinc</keyword>
<keyword id="KW-0863">Zinc-finger</keyword>
<feature type="chain" id="PRO_0000056074" description="E3 ubiquitin-protein ligase RNF34">
    <location>
        <begin position="1"/>
        <end position="372"/>
    </location>
</feature>
<feature type="domain" description="SAP 1">
    <location>
        <begin position="115"/>
        <end position="134"/>
    </location>
</feature>
<feature type="domain" description="SAP 2">
    <location>
        <begin position="264"/>
        <end position="278"/>
    </location>
</feature>
<feature type="zinc finger region" description="FYVE-type">
    <location>
        <begin position="56"/>
        <end position="107"/>
    </location>
</feature>
<feature type="zinc finger region" description="RING-type" evidence="4">
    <location>
        <begin position="325"/>
        <end position="360"/>
    </location>
</feature>
<feature type="region of interest" description="Disordered" evidence="5">
    <location>
        <begin position="194"/>
        <end position="252"/>
    </location>
</feature>
<feature type="compositionally biased region" description="Polar residues" evidence="5">
    <location>
        <begin position="201"/>
        <end position="220"/>
    </location>
</feature>
<feature type="compositionally biased region" description="Acidic residues" evidence="5">
    <location>
        <begin position="221"/>
        <end position="240"/>
    </location>
</feature>
<feature type="site" description="Cleavage; by caspase-3" evidence="2">
    <location>
        <begin position="231"/>
        <end position="232"/>
    </location>
</feature>
<feature type="modified residue" description="Phosphoserine" evidence="2">
    <location>
        <position position="169"/>
    </location>
</feature>
<feature type="modified residue" description="Phosphoserine" evidence="2">
    <location>
        <position position="254"/>
    </location>
</feature>
<feature type="modified residue" description="Phosphoserine" evidence="3">
    <location>
        <position position="256"/>
    </location>
</feature>
<feature type="sequence conflict" description="In Ref. 1; CAH93157." evidence="6" ref="1">
    <original>M</original>
    <variation>MR</variation>
    <location>
        <position position="1"/>
    </location>
</feature>
<feature type="sequence conflict" description="In Ref. 1; CAI29676." evidence="6" ref="1">
    <original>V</original>
    <variation>A</variation>
    <location>
        <position position="281"/>
    </location>
</feature>
<feature type="sequence conflict" description="In Ref. 1; CAI29736." evidence="6" ref="1">
    <original>K</original>
    <variation>R</variation>
    <location>
        <position position="295"/>
    </location>
</feature>